<reference key="1">
    <citation type="journal article" date="2009" name="Appl. Environ. Microbiol.">
        <title>Three genomes from the phylum Acidobacteria provide insight into the lifestyles of these microorganisms in soils.</title>
        <authorList>
            <person name="Ward N.L."/>
            <person name="Challacombe J.F."/>
            <person name="Janssen P.H."/>
            <person name="Henrissat B."/>
            <person name="Coutinho P.M."/>
            <person name="Wu M."/>
            <person name="Xie G."/>
            <person name="Haft D.H."/>
            <person name="Sait M."/>
            <person name="Badger J."/>
            <person name="Barabote R.D."/>
            <person name="Bradley B."/>
            <person name="Brettin T.S."/>
            <person name="Brinkac L.M."/>
            <person name="Bruce D."/>
            <person name="Creasy T."/>
            <person name="Daugherty S.C."/>
            <person name="Davidsen T.M."/>
            <person name="DeBoy R.T."/>
            <person name="Detter J.C."/>
            <person name="Dodson R.J."/>
            <person name="Durkin A.S."/>
            <person name="Ganapathy A."/>
            <person name="Gwinn-Giglio M."/>
            <person name="Han C.S."/>
            <person name="Khouri H."/>
            <person name="Kiss H."/>
            <person name="Kothari S.P."/>
            <person name="Madupu R."/>
            <person name="Nelson K.E."/>
            <person name="Nelson W.C."/>
            <person name="Paulsen I."/>
            <person name="Penn K."/>
            <person name="Ren Q."/>
            <person name="Rosovitz M.J."/>
            <person name="Selengut J.D."/>
            <person name="Shrivastava S."/>
            <person name="Sullivan S.A."/>
            <person name="Tapia R."/>
            <person name="Thompson L.S."/>
            <person name="Watkins K.L."/>
            <person name="Yang Q."/>
            <person name="Yu C."/>
            <person name="Zafar N."/>
            <person name="Zhou L."/>
            <person name="Kuske C.R."/>
        </authorList>
    </citation>
    <scope>NUCLEOTIDE SEQUENCE [LARGE SCALE GENOMIC DNA]</scope>
    <source>
        <strain>Ellin6076</strain>
    </source>
</reference>
<organism>
    <name type="scientific">Solibacter usitatus (strain Ellin6076)</name>
    <dbReference type="NCBI Taxonomy" id="234267"/>
    <lineage>
        <taxon>Bacteria</taxon>
        <taxon>Pseudomonadati</taxon>
        <taxon>Acidobacteriota</taxon>
        <taxon>Terriglobia</taxon>
        <taxon>Bryobacterales</taxon>
        <taxon>Solibacteraceae</taxon>
        <taxon>Candidatus Solibacter</taxon>
    </lineage>
</organism>
<protein>
    <recommendedName>
        <fullName evidence="1">Small ribosomal subunit protein uS8</fullName>
    </recommendedName>
    <alternativeName>
        <fullName evidence="2">30S ribosomal protein S8</fullName>
    </alternativeName>
</protein>
<accession>Q01WA6</accession>
<proteinExistence type="inferred from homology"/>
<dbReference type="EMBL" id="CP000473">
    <property type="protein sequence ID" value="ABJ86059.1"/>
    <property type="molecule type" value="Genomic_DNA"/>
</dbReference>
<dbReference type="SMR" id="Q01WA6"/>
<dbReference type="FunCoup" id="Q01WA6">
    <property type="interactions" value="603"/>
</dbReference>
<dbReference type="STRING" id="234267.Acid_5104"/>
<dbReference type="KEGG" id="sus:Acid_5104"/>
<dbReference type="eggNOG" id="COG0096">
    <property type="taxonomic scope" value="Bacteria"/>
</dbReference>
<dbReference type="HOGENOM" id="CLU_098428_0_2_0"/>
<dbReference type="InParanoid" id="Q01WA6"/>
<dbReference type="OrthoDB" id="9802617at2"/>
<dbReference type="GO" id="GO:1990904">
    <property type="term" value="C:ribonucleoprotein complex"/>
    <property type="evidence" value="ECO:0007669"/>
    <property type="project" value="UniProtKB-KW"/>
</dbReference>
<dbReference type="GO" id="GO:0005840">
    <property type="term" value="C:ribosome"/>
    <property type="evidence" value="ECO:0007669"/>
    <property type="project" value="UniProtKB-KW"/>
</dbReference>
<dbReference type="GO" id="GO:0019843">
    <property type="term" value="F:rRNA binding"/>
    <property type="evidence" value="ECO:0007669"/>
    <property type="project" value="UniProtKB-UniRule"/>
</dbReference>
<dbReference type="GO" id="GO:0003735">
    <property type="term" value="F:structural constituent of ribosome"/>
    <property type="evidence" value="ECO:0007669"/>
    <property type="project" value="InterPro"/>
</dbReference>
<dbReference type="GO" id="GO:0006412">
    <property type="term" value="P:translation"/>
    <property type="evidence" value="ECO:0007669"/>
    <property type="project" value="UniProtKB-UniRule"/>
</dbReference>
<dbReference type="FunFam" id="3.30.1370.30:FF:000002">
    <property type="entry name" value="30S ribosomal protein S8"/>
    <property type="match status" value="1"/>
</dbReference>
<dbReference type="FunFam" id="3.30.1490.10:FF:000001">
    <property type="entry name" value="30S ribosomal protein S8"/>
    <property type="match status" value="1"/>
</dbReference>
<dbReference type="Gene3D" id="3.30.1370.30">
    <property type="match status" value="1"/>
</dbReference>
<dbReference type="Gene3D" id="3.30.1490.10">
    <property type="match status" value="1"/>
</dbReference>
<dbReference type="HAMAP" id="MF_01302_B">
    <property type="entry name" value="Ribosomal_uS8_B"/>
    <property type="match status" value="1"/>
</dbReference>
<dbReference type="InterPro" id="IPR000630">
    <property type="entry name" value="Ribosomal_uS8"/>
</dbReference>
<dbReference type="InterPro" id="IPR047863">
    <property type="entry name" value="Ribosomal_uS8_CS"/>
</dbReference>
<dbReference type="InterPro" id="IPR035987">
    <property type="entry name" value="Ribosomal_uS8_sf"/>
</dbReference>
<dbReference type="NCBIfam" id="NF001109">
    <property type="entry name" value="PRK00136.1"/>
    <property type="match status" value="1"/>
</dbReference>
<dbReference type="PANTHER" id="PTHR11758">
    <property type="entry name" value="40S RIBOSOMAL PROTEIN S15A"/>
    <property type="match status" value="1"/>
</dbReference>
<dbReference type="Pfam" id="PF00410">
    <property type="entry name" value="Ribosomal_S8"/>
    <property type="match status" value="1"/>
</dbReference>
<dbReference type="SUPFAM" id="SSF56047">
    <property type="entry name" value="Ribosomal protein S8"/>
    <property type="match status" value="1"/>
</dbReference>
<dbReference type="PROSITE" id="PS00053">
    <property type="entry name" value="RIBOSOMAL_S8"/>
    <property type="match status" value="1"/>
</dbReference>
<sequence length="131" mass="14496">MTSDPIADMLTRVRNAIQARHPKVDVPASKLKAEIARILKEEGYITNFKVAEEGAKKTIKIYLKYANNNSPVISAIERVSRPGCRVYVGQTDIPRVLGGMGINILTTPRGVMTGRDAHKEHLGGEILCRVW</sequence>
<comment type="function">
    <text evidence="1">One of the primary rRNA binding proteins, it binds directly to 16S rRNA central domain where it helps coordinate assembly of the platform of the 30S subunit.</text>
</comment>
<comment type="subunit">
    <text evidence="1">Part of the 30S ribosomal subunit. Contacts proteins S5 and S12.</text>
</comment>
<comment type="similarity">
    <text evidence="1">Belongs to the universal ribosomal protein uS8 family.</text>
</comment>
<feature type="chain" id="PRO_0000290936" description="Small ribosomal subunit protein uS8">
    <location>
        <begin position="1"/>
        <end position="131"/>
    </location>
</feature>
<evidence type="ECO:0000255" key="1">
    <source>
        <dbReference type="HAMAP-Rule" id="MF_01302"/>
    </source>
</evidence>
<evidence type="ECO:0000305" key="2"/>
<gene>
    <name evidence="1" type="primary">rpsH</name>
    <name type="ordered locus">Acid_5104</name>
</gene>
<name>RS8_SOLUE</name>
<keyword id="KW-0687">Ribonucleoprotein</keyword>
<keyword id="KW-0689">Ribosomal protein</keyword>
<keyword id="KW-0694">RNA-binding</keyword>
<keyword id="KW-0699">rRNA-binding</keyword>